<dbReference type="EC" id="3.5.4.13" evidence="1"/>
<dbReference type="EMBL" id="CP000083">
    <property type="protein sequence ID" value="AAZ24162.1"/>
    <property type="molecule type" value="Genomic_DNA"/>
</dbReference>
<dbReference type="RefSeq" id="WP_011043636.1">
    <property type="nucleotide sequence ID" value="NC_003910.7"/>
</dbReference>
<dbReference type="SMR" id="Q480H7"/>
<dbReference type="STRING" id="167879.CPS_2837"/>
<dbReference type="KEGG" id="cps:CPS_2837"/>
<dbReference type="eggNOG" id="COG0717">
    <property type="taxonomic scope" value="Bacteria"/>
</dbReference>
<dbReference type="HOGENOM" id="CLU_087476_2_0_6"/>
<dbReference type="UniPathway" id="UPA00610">
    <property type="reaction ID" value="UER00665"/>
</dbReference>
<dbReference type="Proteomes" id="UP000000547">
    <property type="component" value="Chromosome"/>
</dbReference>
<dbReference type="GO" id="GO:0008829">
    <property type="term" value="F:dCTP deaminase activity"/>
    <property type="evidence" value="ECO:0007669"/>
    <property type="project" value="UniProtKB-UniRule"/>
</dbReference>
<dbReference type="GO" id="GO:0000166">
    <property type="term" value="F:nucleotide binding"/>
    <property type="evidence" value="ECO:0007669"/>
    <property type="project" value="UniProtKB-KW"/>
</dbReference>
<dbReference type="GO" id="GO:0006226">
    <property type="term" value="P:dUMP biosynthetic process"/>
    <property type="evidence" value="ECO:0007669"/>
    <property type="project" value="UniProtKB-UniPathway"/>
</dbReference>
<dbReference type="GO" id="GO:0006229">
    <property type="term" value="P:dUTP biosynthetic process"/>
    <property type="evidence" value="ECO:0007669"/>
    <property type="project" value="UniProtKB-UniRule"/>
</dbReference>
<dbReference type="GO" id="GO:0015949">
    <property type="term" value="P:nucleobase-containing small molecule interconversion"/>
    <property type="evidence" value="ECO:0007669"/>
    <property type="project" value="TreeGrafter"/>
</dbReference>
<dbReference type="CDD" id="cd07557">
    <property type="entry name" value="trimeric_dUTPase"/>
    <property type="match status" value="1"/>
</dbReference>
<dbReference type="FunFam" id="2.70.40.10:FF:000003">
    <property type="entry name" value="dCTP deaminase"/>
    <property type="match status" value="1"/>
</dbReference>
<dbReference type="Gene3D" id="2.70.40.10">
    <property type="match status" value="1"/>
</dbReference>
<dbReference type="HAMAP" id="MF_00146">
    <property type="entry name" value="dCTP_deaminase"/>
    <property type="match status" value="1"/>
</dbReference>
<dbReference type="InterPro" id="IPR011962">
    <property type="entry name" value="dCTP_deaminase"/>
</dbReference>
<dbReference type="InterPro" id="IPR036157">
    <property type="entry name" value="dUTPase-like_sf"/>
</dbReference>
<dbReference type="InterPro" id="IPR033704">
    <property type="entry name" value="dUTPase_trimeric"/>
</dbReference>
<dbReference type="NCBIfam" id="TIGR02274">
    <property type="entry name" value="dCTP_deam"/>
    <property type="match status" value="1"/>
</dbReference>
<dbReference type="PANTHER" id="PTHR42680">
    <property type="entry name" value="DCTP DEAMINASE"/>
    <property type="match status" value="1"/>
</dbReference>
<dbReference type="PANTHER" id="PTHR42680:SF3">
    <property type="entry name" value="DCTP DEAMINASE"/>
    <property type="match status" value="1"/>
</dbReference>
<dbReference type="Pfam" id="PF22769">
    <property type="entry name" value="DCD"/>
    <property type="match status" value="1"/>
</dbReference>
<dbReference type="SUPFAM" id="SSF51283">
    <property type="entry name" value="dUTPase-like"/>
    <property type="match status" value="1"/>
</dbReference>
<gene>
    <name evidence="1" type="primary">dcd</name>
    <name type="ordered locus">CPS_2837</name>
</gene>
<proteinExistence type="inferred from homology"/>
<name>DCD_COLP3</name>
<accession>Q480H7</accession>
<sequence length="198" mass="22089">MRLCDKDIEQYLDDEKIIIEPKPDSSMISGVSVDIRLGNEFRVFQDHTAPYIDLSAPKGEVQEAMNSIMSDEIFIADGDAFFLHPGELALAVTYESVTLPDNIVGWLDGRSSLARLGLMVHVTAHRIDPGWSGQIVLEFYNSGKLPLALRPKMKIAALNFETMSSSAARPYNKREDAKYRDQKGAVASRISQDEKVNK</sequence>
<reference key="1">
    <citation type="journal article" date="2005" name="Proc. Natl. Acad. Sci. U.S.A.">
        <title>The psychrophilic lifestyle as revealed by the genome sequence of Colwellia psychrerythraea 34H through genomic and proteomic analyses.</title>
        <authorList>
            <person name="Methe B.A."/>
            <person name="Nelson K.E."/>
            <person name="Deming J.W."/>
            <person name="Momen B."/>
            <person name="Melamud E."/>
            <person name="Zhang X."/>
            <person name="Moult J."/>
            <person name="Madupu R."/>
            <person name="Nelson W.C."/>
            <person name="Dodson R.J."/>
            <person name="Brinkac L.M."/>
            <person name="Daugherty S.C."/>
            <person name="Durkin A.S."/>
            <person name="DeBoy R.T."/>
            <person name="Kolonay J.F."/>
            <person name="Sullivan S.A."/>
            <person name="Zhou L."/>
            <person name="Davidsen T.M."/>
            <person name="Wu M."/>
            <person name="Huston A.L."/>
            <person name="Lewis M."/>
            <person name="Weaver B."/>
            <person name="Weidman J.F."/>
            <person name="Khouri H."/>
            <person name="Utterback T.R."/>
            <person name="Feldblyum T.V."/>
            <person name="Fraser C.M."/>
        </authorList>
    </citation>
    <scope>NUCLEOTIDE SEQUENCE [LARGE SCALE GENOMIC DNA]</scope>
    <source>
        <strain>34H / ATCC BAA-681</strain>
    </source>
</reference>
<protein>
    <recommendedName>
        <fullName evidence="1">dCTP deaminase</fullName>
        <ecNumber evidence="1">3.5.4.13</ecNumber>
    </recommendedName>
    <alternativeName>
        <fullName evidence="1">Deoxycytidine triphosphate deaminase</fullName>
    </alternativeName>
</protein>
<comment type="function">
    <text evidence="1">Catalyzes the deamination of dCTP to dUTP.</text>
</comment>
<comment type="catalytic activity">
    <reaction evidence="1">
        <text>dCTP + H2O + H(+) = dUTP + NH4(+)</text>
        <dbReference type="Rhea" id="RHEA:22680"/>
        <dbReference type="ChEBI" id="CHEBI:15377"/>
        <dbReference type="ChEBI" id="CHEBI:15378"/>
        <dbReference type="ChEBI" id="CHEBI:28938"/>
        <dbReference type="ChEBI" id="CHEBI:61481"/>
        <dbReference type="ChEBI" id="CHEBI:61555"/>
        <dbReference type="EC" id="3.5.4.13"/>
    </reaction>
</comment>
<comment type="pathway">
    <text evidence="1">Pyrimidine metabolism; dUMP biosynthesis; dUMP from dCTP (dUTP route): step 1/2.</text>
</comment>
<comment type="subunit">
    <text evidence="1">Homotrimer.</text>
</comment>
<comment type="similarity">
    <text evidence="1">Belongs to the dCTP deaminase family.</text>
</comment>
<evidence type="ECO:0000255" key="1">
    <source>
        <dbReference type="HAMAP-Rule" id="MF_00146"/>
    </source>
</evidence>
<evidence type="ECO:0000256" key="2">
    <source>
        <dbReference type="SAM" id="MobiDB-lite"/>
    </source>
</evidence>
<keyword id="KW-0378">Hydrolase</keyword>
<keyword id="KW-0546">Nucleotide metabolism</keyword>
<keyword id="KW-0547">Nucleotide-binding</keyword>
<feature type="chain" id="PRO_1000009710" description="dCTP deaminase">
    <location>
        <begin position="1"/>
        <end position="198"/>
    </location>
</feature>
<feature type="region of interest" description="Disordered" evidence="2">
    <location>
        <begin position="168"/>
        <end position="198"/>
    </location>
</feature>
<feature type="compositionally biased region" description="Basic and acidic residues" evidence="2">
    <location>
        <begin position="172"/>
        <end position="183"/>
    </location>
</feature>
<feature type="active site" description="Proton donor/acceptor" evidence="1">
    <location>
        <position position="138"/>
    </location>
</feature>
<feature type="binding site" evidence="1">
    <location>
        <begin position="110"/>
        <end position="115"/>
    </location>
    <ligand>
        <name>dCTP</name>
        <dbReference type="ChEBI" id="CHEBI:61481"/>
    </ligand>
</feature>
<feature type="binding site" evidence="1">
    <location>
        <position position="128"/>
    </location>
    <ligand>
        <name>dCTP</name>
        <dbReference type="ChEBI" id="CHEBI:61481"/>
    </ligand>
</feature>
<feature type="binding site" evidence="1">
    <location>
        <begin position="136"/>
        <end position="138"/>
    </location>
    <ligand>
        <name>dCTP</name>
        <dbReference type="ChEBI" id="CHEBI:61481"/>
    </ligand>
</feature>
<feature type="binding site" evidence="1">
    <location>
        <position position="171"/>
    </location>
    <ligand>
        <name>dCTP</name>
        <dbReference type="ChEBI" id="CHEBI:61481"/>
    </ligand>
</feature>
<feature type="binding site" evidence="1">
    <location>
        <position position="178"/>
    </location>
    <ligand>
        <name>dCTP</name>
        <dbReference type="ChEBI" id="CHEBI:61481"/>
    </ligand>
</feature>
<feature type="binding site" evidence="1">
    <location>
        <position position="182"/>
    </location>
    <ligand>
        <name>dCTP</name>
        <dbReference type="ChEBI" id="CHEBI:61481"/>
    </ligand>
</feature>
<organism>
    <name type="scientific">Colwellia psychrerythraea (strain 34H / ATCC BAA-681)</name>
    <name type="common">Vibrio psychroerythus</name>
    <dbReference type="NCBI Taxonomy" id="167879"/>
    <lineage>
        <taxon>Bacteria</taxon>
        <taxon>Pseudomonadati</taxon>
        <taxon>Pseudomonadota</taxon>
        <taxon>Gammaproteobacteria</taxon>
        <taxon>Alteromonadales</taxon>
        <taxon>Colwelliaceae</taxon>
        <taxon>Colwellia</taxon>
    </lineage>
</organism>